<evidence type="ECO:0000255" key="1">
    <source>
        <dbReference type="HAMAP-Rule" id="MF_01369"/>
    </source>
</evidence>
<evidence type="ECO:0000305" key="2"/>
<name>RL23_BURM7</name>
<reference key="1">
    <citation type="journal article" date="2010" name="Genome Biol. Evol.">
        <title>Continuing evolution of Burkholderia mallei through genome reduction and large-scale rearrangements.</title>
        <authorList>
            <person name="Losada L."/>
            <person name="Ronning C.M."/>
            <person name="DeShazer D."/>
            <person name="Woods D."/>
            <person name="Fedorova N."/>
            <person name="Kim H.S."/>
            <person name="Shabalina S.A."/>
            <person name="Pearson T.R."/>
            <person name="Brinkac L."/>
            <person name="Tan P."/>
            <person name="Nandi T."/>
            <person name="Crabtree J."/>
            <person name="Badger J."/>
            <person name="Beckstrom-Sternberg S."/>
            <person name="Saqib M."/>
            <person name="Schutzer S.E."/>
            <person name="Keim P."/>
            <person name="Nierman W.C."/>
        </authorList>
    </citation>
    <scope>NUCLEOTIDE SEQUENCE [LARGE SCALE GENOMIC DNA]</scope>
    <source>
        <strain>NCTC 10247</strain>
    </source>
</reference>
<accession>A3MRV6</accession>
<keyword id="KW-0687">Ribonucleoprotein</keyword>
<keyword id="KW-0689">Ribosomal protein</keyword>
<keyword id="KW-0694">RNA-binding</keyword>
<keyword id="KW-0699">rRNA-binding</keyword>
<comment type="function">
    <text evidence="1">One of the early assembly proteins it binds 23S rRNA. One of the proteins that surrounds the polypeptide exit tunnel on the outside of the ribosome. Forms the main docking site for trigger factor binding to the ribosome.</text>
</comment>
<comment type="subunit">
    <text evidence="1">Part of the 50S ribosomal subunit. Contacts protein L29, and trigger factor when it is bound to the ribosome.</text>
</comment>
<comment type="similarity">
    <text evidence="1">Belongs to the universal ribosomal protein uL23 family.</text>
</comment>
<dbReference type="EMBL" id="CP000548">
    <property type="protein sequence ID" value="ABO06986.1"/>
    <property type="molecule type" value="Genomic_DNA"/>
</dbReference>
<dbReference type="RefSeq" id="WP_004199275.1">
    <property type="nucleotide sequence ID" value="NZ_CP007802.1"/>
</dbReference>
<dbReference type="SMR" id="A3MRV6"/>
<dbReference type="GeneID" id="98107158"/>
<dbReference type="KEGG" id="bmaz:BM44_3039"/>
<dbReference type="KEGG" id="bmn:BMA10247_3480"/>
<dbReference type="PATRIC" id="fig|320389.8.peg.3411"/>
<dbReference type="GO" id="GO:1990904">
    <property type="term" value="C:ribonucleoprotein complex"/>
    <property type="evidence" value="ECO:0007669"/>
    <property type="project" value="UniProtKB-KW"/>
</dbReference>
<dbReference type="GO" id="GO:0005840">
    <property type="term" value="C:ribosome"/>
    <property type="evidence" value="ECO:0007669"/>
    <property type="project" value="UniProtKB-KW"/>
</dbReference>
<dbReference type="GO" id="GO:0019843">
    <property type="term" value="F:rRNA binding"/>
    <property type="evidence" value="ECO:0007669"/>
    <property type="project" value="UniProtKB-UniRule"/>
</dbReference>
<dbReference type="GO" id="GO:0003735">
    <property type="term" value="F:structural constituent of ribosome"/>
    <property type="evidence" value="ECO:0007669"/>
    <property type="project" value="InterPro"/>
</dbReference>
<dbReference type="GO" id="GO:0006412">
    <property type="term" value="P:translation"/>
    <property type="evidence" value="ECO:0007669"/>
    <property type="project" value="UniProtKB-UniRule"/>
</dbReference>
<dbReference type="FunFam" id="3.30.70.330:FF:000001">
    <property type="entry name" value="50S ribosomal protein L23"/>
    <property type="match status" value="1"/>
</dbReference>
<dbReference type="Gene3D" id="3.30.70.330">
    <property type="match status" value="1"/>
</dbReference>
<dbReference type="HAMAP" id="MF_01369_B">
    <property type="entry name" value="Ribosomal_uL23_B"/>
    <property type="match status" value="1"/>
</dbReference>
<dbReference type="InterPro" id="IPR012677">
    <property type="entry name" value="Nucleotide-bd_a/b_plait_sf"/>
</dbReference>
<dbReference type="InterPro" id="IPR013025">
    <property type="entry name" value="Ribosomal_uL23-like"/>
</dbReference>
<dbReference type="InterPro" id="IPR012678">
    <property type="entry name" value="Ribosomal_uL23/eL15/eS24_sf"/>
</dbReference>
<dbReference type="NCBIfam" id="NF004359">
    <property type="entry name" value="PRK05738.1-3"/>
    <property type="match status" value="1"/>
</dbReference>
<dbReference type="NCBIfam" id="NF004363">
    <property type="entry name" value="PRK05738.2-4"/>
    <property type="match status" value="1"/>
</dbReference>
<dbReference type="PANTHER" id="PTHR11620">
    <property type="entry name" value="60S RIBOSOMAL PROTEIN L23A"/>
    <property type="match status" value="1"/>
</dbReference>
<dbReference type="Pfam" id="PF00276">
    <property type="entry name" value="Ribosomal_L23"/>
    <property type="match status" value="1"/>
</dbReference>
<dbReference type="SUPFAM" id="SSF54189">
    <property type="entry name" value="Ribosomal proteins S24e, L23 and L15e"/>
    <property type="match status" value="1"/>
</dbReference>
<gene>
    <name evidence="1" type="primary">rplW</name>
    <name type="ordered locus">BMA10247_3480</name>
</gene>
<proteinExistence type="inferred from homology"/>
<feature type="chain" id="PRO_1000068046" description="Large ribosomal subunit protein uL23">
    <location>
        <begin position="1"/>
        <end position="104"/>
    </location>
</feature>
<protein>
    <recommendedName>
        <fullName evidence="1">Large ribosomal subunit protein uL23</fullName>
    </recommendedName>
    <alternativeName>
        <fullName evidence="2">50S ribosomal protein L23</fullName>
    </alternativeName>
</protein>
<sequence>MSEIRKNDHRLMQVLLAPVISEKATLVADKNEQVVFEVAPDATKQEVKAAVELLFKVEVDSVNVLVQKGKQKRFGRSMGRRKDVKKAYVCLKPGQEINFEAEAK</sequence>
<organism>
    <name type="scientific">Burkholderia mallei (strain NCTC 10247)</name>
    <dbReference type="NCBI Taxonomy" id="320389"/>
    <lineage>
        <taxon>Bacteria</taxon>
        <taxon>Pseudomonadati</taxon>
        <taxon>Pseudomonadota</taxon>
        <taxon>Betaproteobacteria</taxon>
        <taxon>Burkholderiales</taxon>
        <taxon>Burkholderiaceae</taxon>
        <taxon>Burkholderia</taxon>
        <taxon>pseudomallei group</taxon>
    </lineage>
</organism>